<reference key="1">
    <citation type="submission" date="2007-10" db="EMBL/GenBank/DDBJ databases">
        <title>Complete genome of Alkaliphilus oremlandii OhILAs.</title>
        <authorList>
            <person name="Copeland A."/>
            <person name="Lucas S."/>
            <person name="Lapidus A."/>
            <person name="Barry K."/>
            <person name="Detter J.C."/>
            <person name="Glavina del Rio T."/>
            <person name="Hammon N."/>
            <person name="Israni S."/>
            <person name="Dalin E."/>
            <person name="Tice H."/>
            <person name="Pitluck S."/>
            <person name="Chain P."/>
            <person name="Malfatti S."/>
            <person name="Shin M."/>
            <person name="Vergez L."/>
            <person name="Schmutz J."/>
            <person name="Larimer F."/>
            <person name="Land M."/>
            <person name="Hauser L."/>
            <person name="Kyrpides N."/>
            <person name="Mikhailova N."/>
            <person name="Stolz J.F."/>
            <person name="Dawson A."/>
            <person name="Fisher E."/>
            <person name="Crable B."/>
            <person name="Perera E."/>
            <person name="Lisak J."/>
            <person name="Ranganathan M."/>
            <person name="Basu P."/>
            <person name="Richardson P."/>
        </authorList>
    </citation>
    <scope>NUCLEOTIDE SEQUENCE [LARGE SCALE GENOMIC DNA]</scope>
    <source>
        <strain>OhILAs</strain>
    </source>
</reference>
<proteinExistence type="inferred from homology"/>
<organism>
    <name type="scientific">Alkaliphilus oremlandii (strain OhILAs)</name>
    <name type="common">Clostridium oremlandii (strain OhILAs)</name>
    <dbReference type="NCBI Taxonomy" id="350688"/>
    <lineage>
        <taxon>Bacteria</taxon>
        <taxon>Bacillati</taxon>
        <taxon>Bacillota</taxon>
        <taxon>Clostridia</taxon>
        <taxon>Peptostreptococcales</taxon>
        <taxon>Natronincolaceae</taxon>
        <taxon>Alkaliphilus</taxon>
    </lineage>
</organism>
<comment type="function">
    <text evidence="1">Catalyzes the condensation of carbamoyl phosphate and aspartate to form carbamoyl aspartate and inorganic phosphate, the committed step in the de novo pyrimidine nucleotide biosynthesis pathway.</text>
</comment>
<comment type="catalytic activity">
    <reaction evidence="1">
        <text>carbamoyl phosphate + L-aspartate = N-carbamoyl-L-aspartate + phosphate + H(+)</text>
        <dbReference type="Rhea" id="RHEA:20013"/>
        <dbReference type="ChEBI" id="CHEBI:15378"/>
        <dbReference type="ChEBI" id="CHEBI:29991"/>
        <dbReference type="ChEBI" id="CHEBI:32814"/>
        <dbReference type="ChEBI" id="CHEBI:43474"/>
        <dbReference type="ChEBI" id="CHEBI:58228"/>
        <dbReference type="EC" id="2.1.3.2"/>
    </reaction>
</comment>
<comment type="pathway">
    <text evidence="1">Pyrimidine metabolism; UMP biosynthesis via de novo pathway; (S)-dihydroorotate from bicarbonate: step 2/3.</text>
</comment>
<comment type="subunit">
    <text evidence="1">Heterododecamer (2C3:3R2) of six catalytic PyrB chains organized as two trimers (C3), and six regulatory PyrI chains organized as three dimers (R2).</text>
</comment>
<comment type="similarity">
    <text evidence="1">Belongs to the aspartate/ornithine carbamoyltransferase superfamily. ATCase family.</text>
</comment>
<name>PYRB_ALKOO</name>
<protein>
    <recommendedName>
        <fullName evidence="1">Aspartate carbamoyltransferase catalytic subunit</fullName>
        <ecNumber evidence="1">2.1.3.2</ecNumber>
    </recommendedName>
    <alternativeName>
        <fullName evidence="1">Aspartate transcarbamylase</fullName>
        <shortName evidence="1">ATCase</shortName>
    </alternativeName>
</protein>
<accession>A8MIU1</accession>
<dbReference type="EC" id="2.1.3.2" evidence="1"/>
<dbReference type="EMBL" id="CP000853">
    <property type="protein sequence ID" value="ABW19723.1"/>
    <property type="molecule type" value="Genomic_DNA"/>
</dbReference>
<dbReference type="RefSeq" id="WP_012160032.1">
    <property type="nucleotide sequence ID" value="NC_009922.1"/>
</dbReference>
<dbReference type="SMR" id="A8MIU1"/>
<dbReference type="STRING" id="350688.Clos_2188"/>
<dbReference type="KEGG" id="aoe:Clos_2188"/>
<dbReference type="eggNOG" id="COG0540">
    <property type="taxonomic scope" value="Bacteria"/>
</dbReference>
<dbReference type="HOGENOM" id="CLU_043846_1_2_9"/>
<dbReference type="OrthoDB" id="9774690at2"/>
<dbReference type="UniPathway" id="UPA00070">
    <property type="reaction ID" value="UER00116"/>
</dbReference>
<dbReference type="Proteomes" id="UP000000269">
    <property type="component" value="Chromosome"/>
</dbReference>
<dbReference type="GO" id="GO:0016597">
    <property type="term" value="F:amino acid binding"/>
    <property type="evidence" value="ECO:0007669"/>
    <property type="project" value="InterPro"/>
</dbReference>
<dbReference type="GO" id="GO:0004070">
    <property type="term" value="F:aspartate carbamoyltransferase activity"/>
    <property type="evidence" value="ECO:0007669"/>
    <property type="project" value="UniProtKB-UniRule"/>
</dbReference>
<dbReference type="GO" id="GO:0006207">
    <property type="term" value="P:'de novo' pyrimidine nucleobase biosynthetic process"/>
    <property type="evidence" value="ECO:0007669"/>
    <property type="project" value="InterPro"/>
</dbReference>
<dbReference type="GO" id="GO:0044205">
    <property type="term" value="P:'de novo' UMP biosynthetic process"/>
    <property type="evidence" value="ECO:0007669"/>
    <property type="project" value="UniProtKB-UniRule"/>
</dbReference>
<dbReference type="GO" id="GO:0006520">
    <property type="term" value="P:amino acid metabolic process"/>
    <property type="evidence" value="ECO:0007669"/>
    <property type="project" value="InterPro"/>
</dbReference>
<dbReference type="FunFam" id="3.40.50.1370:FF:000002">
    <property type="entry name" value="Aspartate carbamoyltransferase 2"/>
    <property type="match status" value="1"/>
</dbReference>
<dbReference type="Gene3D" id="3.40.50.1370">
    <property type="entry name" value="Aspartate/ornithine carbamoyltransferase"/>
    <property type="match status" value="2"/>
</dbReference>
<dbReference type="HAMAP" id="MF_00001">
    <property type="entry name" value="Asp_carb_tr"/>
    <property type="match status" value="1"/>
</dbReference>
<dbReference type="InterPro" id="IPR006132">
    <property type="entry name" value="Asp/Orn_carbamoyltranf_P-bd"/>
</dbReference>
<dbReference type="InterPro" id="IPR006130">
    <property type="entry name" value="Asp/Orn_carbamoylTrfase"/>
</dbReference>
<dbReference type="InterPro" id="IPR036901">
    <property type="entry name" value="Asp/Orn_carbamoylTrfase_sf"/>
</dbReference>
<dbReference type="InterPro" id="IPR002082">
    <property type="entry name" value="Asp_carbamoyltransf"/>
</dbReference>
<dbReference type="InterPro" id="IPR006131">
    <property type="entry name" value="Asp_carbamoyltransf_Asp/Orn-bd"/>
</dbReference>
<dbReference type="NCBIfam" id="TIGR00670">
    <property type="entry name" value="asp_carb_tr"/>
    <property type="match status" value="1"/>
</dbReference>
<dbReference type="NCBIfam" id="NF002032">
    <property type="entry name" value="PRK00856.1"/>
    <property type="match status" value="1"/>
</dbReference>
<dbReference type="PANTHER" id="PTHR45753:SF6">
    <property type="entry name" value="ASPARTATE CARBAMOYLTRANSFERASE"/>
    <property type="match status" value="1"/>
</dbReference>
<dbReference type="PANTHER" id="PTHR45753">
    <property type="entry name" value="ORNITHINE CARBAMOYLTRANSFERASE, MITOCHONDRIAL"/>
    <property type="match status" value="1"/>
</dbReference>
<dbReference type="Pfam" id="PF00185">
    <property type="entry name" value="OTCace"/>
    <property type="match status" value="1"/>
</dbReference>
<dbReference type="Pfam" id="PF02729">
    <property type="entry name" value="OTCace_N"/>
    <property type="match status" value="1"/>
</dbReference>
<dbReference type="PRINTS" id="PR00100">
    <property type="entry name" value="AOTCASE"/>
</dbReference>
<dbReference type="PRINTS" id="PR00101">
    <property type="entry name" value="ATCASE"/>
</dbReference>
<dbReference type="SUPFAM" id="SSF53671">
    <property type="entry name" value="Aspartate/ornithine carbamoyltransferase"/>
    <property type="match status" value="1"/>
</dbReference>
<dbReference type="PROSITE" id="PS00097">
    <property type="entry name" value="CARBAMOYLTRANSFERASE"/>
    <property type="match status" value="1"/>
</dbReference>
<keyword id="KW-0665">Pyrimidine biosynthesis</keyword>
<keyword id="KW-1185">Reference proteome</keyword>
<keyword id="KW-0808">Transferase</keyword>
<gene>
    <name evidence="1" type="primary">pyrB</name>
    <name type="ordered locus">Clos_2188</name>
</gene>
<evidence type="ECO:0000255" key="1">
    <source>
        <dbReference type="HAMAP-Rule" id="MF_00001"/>
    </source>
</evidence>
<feature type="chain" id="PRO_0000321068" description="Aspartate carbamoyltransferase catalytic subunit">
    <location>
        <begin position="1"/>
        <end position="331"/>
    </location>
</feature>
<feature type="binding site" evidence="1">
    <location>
        <position position="55"/>
    </location>
    <ligand>
        <name>carbamoyl phosphate</name>
        <dbReference type="ChEBI" id="CHEBI:58228"/>
    </ligand>
</feature>
<feature type="binding site" evidence="1">
    <location>
        <position position="56"/>
    </location>
    <ligand>
        <name>carbamoyl phosphate</name>
        <dbReference type="ChEBI" id="CHEBI:58228"/>
    </ligand>
</feature>
<feature type="binding site" evidence="1">
    <location>
        <position position="84"/>
    </location>
    <ligand>
        <name>L-aspartate</name>
        <dbReference type="ChEBI" id="CHEBI:29991"/>
    </ligand>
</feature>
<feature type="binding site" evidence="1">
    <location>
        <position position="105"/>
    </location>
    <ligand>
        <name>carbamoyl phosphate</name>
        <dbReference type="ChEBI" id="CHEBI:58228"/>
    </ligand>
</feature>
<feature type="binding site" evidence="1">
    <location>
        <position position="133"/>
    </location>
    <ligand>
        <name>carbamoyl phosphate</name>
        <dbReference type="ChEBI" id="CHEBI:58228"/>
    </ligand>
</feature>
<feature type="binding site" evidence="1">
    <location>
        <position position="136"/>
    </location>
    <ligand>
        <name>carbamoyl phosphate</name>
        <dbReference type="ChEBI" id="CHEBI:58228"/>
    </ligand>
</feature>
<feature type="binding site" evidence="1">
    <location>
        <position position="166"/>
    </location>
    <ligand>
        <name>L-aspartate</name>
        <dbReference type="ChEBI" id="CHEBI:29991"/>
    </ligand>
</feature>
<feature type="binding site" evidence="1">
    <location>
        <position position="229"/>
    </location>
    <ligand>
        <name>L-aspartate</name>
        <dbReference type="ChEBI" id="CHEBI:29991"/>
    </ligand>
</feature>
<feature type="binding site" evidence="1">
    <location>
        <position position="268"/>
    </location>
    <ligand>
        <name>carbamoyl phosphate</name>
        <dbReference type="ChEBI" id="CHEBI:58228"/>
    </ligand>
</feature>
<feature type="binding site" evidence="1">
    <location>
        <position position="269"/>
    </location>
    <ligand>
        <name>carbamoyl phosphate</name>
        <dbReference type="ChEBI" id="CHEBI:58228"/>
    </ligand>
</feature>
<sequence>MPLKGKHLIDPDQLTFNEIHEIINLGLDMEQNPAKYSKVCEGKILGTMFFEPSTRTRLSFESAMLRMGGTVLGFSDVTTSSVTKGESVADTIRVLDDYADILVMRHPVAGTPREASQYSTVPVINGGDGGHQHPTQTLTDLITIQKYHGEIRGLKVAFCGDLLFGRTVHSLLKTLSRFPDMEFILISPPELPIPEDLKTEVIEKYNVKITETDSLEKHMAEIDILYMTRIQKERFLNQEDYEKLKDSYILTNSLLENAKQDLIILHPLPRVNEIHTEVDRDPRAKYFEQAKMGVYVRMALMALLLGNIEIAAPTLTLKVKNGTIMTKFIAS</sequence>